<organism>
    <name type="scientific">Staphylococcus aureus</name>
    <dbReference type="NCBI Taxonomy" id="1280"/>
    <lineage>
        <taxon>Bacteria</taxon>
        <taxon>Bacillati</taxon>
        <taxon>Bacillota</taxon>
        <taxon>Bacilli</taxon>
        <taxon>Bacillales</taxon>
        <taxon>Staphylococcaceae</taxon>
        <taxon>Staphylococcus</taxon>
    </lineage>
</organism>
<gene>
    <name type="primary">cna</name>
</gene>
<protein>
    <recommendedName>
        <fullName>Collagen adhesin</fullName>
    </recommendedName>
</protein>
<reference key="1">
    <citation type="journal article" date="1992" name="J. Biol. Chem.">
        <title>Molecular characterization and expression of a gene encoding a Staphylococcus aureus collagen adhesin.</title>
        <authorList>
            <person name="Patti J.M."/>
            <person name="Jonsson H."/>
            <person name="Guss B."/>
            <person name="Switalski L.M."/>
            <person name="Wiberg K."/>
            <person name="Lindberg M."/>
            <person name="Hoeoek M."/>
        </authorList>
    </citation>
    <scope>NUCLEOTIDE SEQUENCE [GENOMIC DNA]</scope>
    <source>
        <strain>FDA 574</strain>
    </source>
</reference>
<reference key="2">
    <citation type="journal article" date="1994" name="J. Biol. Chem.">
        <authorList>
            <person name="Patti J.M."/>
            <person name="Jonsson H."/>
            <person name="Guss B."/>
            <person name="Switalski L.M."/>
            <person name="Wiberg K."/>
            <person name="Lindberg M."/>
            <person name="Hoeoek M."/>
        </authorList>
    </citation>
    <scope>ERRATUM OF PUBMED:1311320</scope>
</reference>
<reference key="3">
    <citation type="journal article" date="1993" name="Biochemistry">
        <title>Identification and biochemical characterization of the ligand binding domain of the collagen adhesin from Staphylococcus aureus.</title>
        <authorList>
            <person name="Patti J.M."/>
            <person name="Boles J.O."/>
            <person name="Hoeoek M."/>
        </authorList>
    </citation>
    <scope>DOMAIN COLLAGEN-BINDING</scope>
    <scope>FUNCTION</scope>
    <source>
        <strain>FDA 574</strain>
    </source>
</reference>
<reference key="4">
    <citation type="journal article" date="2000" name="Infect. Immun.">
        <title>The collagen-binding adhesin is a virulence factor in Staphylococcus aureus keratitis.</title>
        <authorList>
            <person name="Rhem M.N."/>
            <person name="Lech E.M."/>
            <person name="Patti J.M."/>
            <person name="McDevitt D."/>
            <person name="Hoeoek M."/>
            <person name="Jones D.B."/>
            <person name="Wilhelmus K.R."/>
        </authorList>
    </citation>
    <scope>FUNCTION</scope>
</reference>
<reference key="5">
    <citation type="journal article" date="2004" name="J. Infect. Dis.">
        <title>Virulence potential of the staphylococcal adhesin CNA in experimental arthritis is determined by its affinity for collagen.</title>
        <authorList>
            <person name="Xu Y."/>
            <person name="Rivas J.M."/>
            <person name="Brown E.L."/>
            <person name="Liang X."/>
            <person name="Hoeoek M."/>
        </authorList>
    </citation>
    <scope>FUNCTION</scope>
</reference>
<reference key="6">
    <citation type="journal article" date="2007" name="Science">
        <title>Stabilizing isopeptide bonds revealed in Gram-positive bacterial pilus structure.</title>
        <authorList>
            <person name="Kang H.J."/>
            <person name="Coulibaly F."/>
            <person name="Clow F."/>
            <person name="Proft T."/>
            <person name="Baker E.N."/>
        </authorList>
    </citation>
    <scope>CROSS-LINKS</scope>
</reference>
<reference key="7">
    <citation type="journal article" date="2013" name="J. Biol. Chem.">
        <title>Collagen-binding microbial surface components recognizing adhesive matrix molecule (MSCRAMM) of Gram-positive bacteria inhibit complement activation via the classical pathway.</title>
        <authorList>
            <person name="Kang M."/>
            <person name="Ko Y.P."/>
            <person name="Liang X."/>
            <person name="Ross C.L."/>
            <person name="Liu Q."/>
            <person name="Murray B.E."/>
            <person name="Hoeoek M."/>
        </authorList>
    </citation>
    <scope>FUNCTION</scope>
    <scope>INTERACTION WITH HOST C1QA</scope>
    <scope>MUTAGENESIS OF TYR-175</scope>
    <source>
        <strain>Phillips</strain>
    </source>
</reference>
<reference key="8">
    <citation type="journal article" date="1997" name="Nat. Struct. Biol.">
        <title>Structure of the collagen-binding domain from a Staphylococcus aureus adhesin.</title>
        <authorList>
            <person name="Symersky J."/>
            <person name="Patti J.M."/>
            <person name="Carson M."/>
            <person name="House-Pompeo K."/>
            <person name="Teale M."/>
            <person name="Moore D."/>
            <person name="Jin L."/>
            <person name="Schneider A."/>
            <person name="DeLucas L.J."/>
            <person name="Hoeoek M."/>
            <person name="Narayana S.V.L."/>
        </authorList>
    </citation>
    <scope>X-RAY CRYSTALLOGRAPHY (2.0 ANGSTROMS) OF 169-318</scope>
</reference>
<reference key="9">
    <citation type="journal article" date="2000" name="Structure">
        <title>Novel fold and assembly of the repetitive B region of the Staphylococcus aureus collagen-binding surface protein.</title>
        <authorList>
            <person name="Deivanayagam C.C."/>
            <person name="Rich R.L."/>
            <person name="Carson M."/>
            <person name="Owens R.T."/>
            <person name="Danthuluri S."/>
            <person name="Bice T."/>
            <person name="Hoeoek M."/>
            <person name="Narayana S.V."/>
        </authorList>
    </citation>
    <scope>X-RAY CRYSTALLOGRAPHY (2.00 ANGSTROMS) OF 533-905</scope>
    <scope>REGION</scope>
</reference>
<reference key="10">
    <citation type="journal article" date="2005" name="EMBO J.">
        <title>A 'Collagen Hug' model for Staphylococcus aureus CNA binding to collagen.</title>
        <authorList>
            <person name="Zong Y."/>
            <person name="Xu Y."/>
            <person name="Liang X."/>
            <person name="Keene D.R."/>
            <person name="Hoeoek A."/>
            <person name="Gurusiddappa S."/>
            <person name="Hoeoek M."/>
            <person name="Narayana S.V."/>
        </authorList>
    </citation>
    <scope>X-RAY CRYSTALLOGRAPHY (1.95 ANGSTROMS) OF 30-330</scope>
    <scope>REGION</scope>
    <scope>COLLAGEN TYPE I BINDING</scope>
</reference>
<dbReference type="EMBL" id="M81736">
    <property type="protein sequence ID" value="AAA20874.1"/>
    <property type="molecule type" value="Genomic_DNA"/>
</dbReference>
<dbReference type="PDB" id="1AMX">
    <property type="method" value="X-ray"/>
    <property type="resolution" value="2.00 A"/>
    <property type="chains" value="A=151-318"/>
</dbReference>
<dbReference type="PDB" id="1D2O">
    <property type="method" value="X-ray"/>
    <property type="resolution" value="2.00 A"/>
    <property type="chains" value="A/B=533-719"/>
</dbReference>
<dbReference type="PDB" id="1D2P">
    <property type="method" value="X-ray"/>
    <property type="resolution" value="2.50 A"/>
    <property type="chains" value="A=533-905"/>
</dbReference>
<dbReference type="PDB" id="2F68">
    <property type="method" value="X-ray"/>
    <property type="resolution" value="1.95 A"/>
    <property type="chains" value="X=30-334"/>
</dbReference>
<dbReference type="PDB" id="2F6A">
    <property type="method" value="X-ray"/>
    <property type="resolution" value="3.29 A"/>
    <property type="chains" value="A/B/C/D=30-330"/>
</dbReference>
<dbReference type="PDBsum" id="1AMX"/>
<dbReference type="PDBsum" id="1D2O"/>
<dbReference type="PDBsum" id="1D2P"/>
<dbReference type="PDBsum" id="2F68"/>
<dbReference type="PDBsum" id="2F6A"/>
<dbReference type="SMR" id="Q53654"/>
<dbReference type="EvolutionaryTrace" id="Q53654"/>
<dbReference type="PRO" id="PR:Q53654"/>
<dbReference type="GO" id="GO:0005576">
    <property type="term" value="C:extracellular region"/>
    <property type="evidence" value="ECO:0007669"/>
    <property type="project" value="UniProtKB-KW"/>
</dbReference>
<dbReference type="GO" id="GO:0009274">
    <property type="term" value="C:peptidoglycan-based cell wall"/>
    <property type="evidence" value="ECO:0000314"/>
    <property type="project" value="CACAO"/>
</dbReference>
<dbReference type="GO" id="GO:0005518">
    <property type="term" value="F:collagen binding"/>
    <property type="evidence" value="ECO:0007669"/>
    <property type="project" value="InterPro"/>
</dbReference>
<dbReference type="GO" id="GO:0007155">
    <property type="term" value="P:cell adhesion"/>
    <property type="evidence" value="ECO:0007669"/>
    <property type="project" value="InterPro"/>
</dbReference>
<dbReference type="CDD" id="cd00222">
    <property type="entry name" value="CollagenBindB"/>
    <property type="match status" value="6"/>
</dbReference>
<dbReference type="DisProt" id="DP00098"/>
<dbReference type="Gene3D" id="2.60.40.1280">
    <property type="match status" value="1"/>
</dbReference>
<dbReference type="Gene3D" id="2.60.40.740">
    <property type="match status" value="1"/>
</dbReference>
<dbReference type="Gene3D" id="2.60.40.1140">
    <property type="entry name" value="Collagen-binding surface protein Cna, B-type domain"/>
    <property type="match status" value="7"/>
</dbReference>
<dbReference type="Gene3D" id="2.60.40.10">
    <property type="entry name" value="Immunoglobulins"/>
    <property type="match status" value="1"/>
</dbReference>
<dbReference type="InterPro" id="IPR008966">
    <property type="entry name" value="Adhesion_dom_sf"/>
</dbReference>
<dbReference type="InterPro" id="IPR008454">
    <property type="entry name" value="Collagen-bd_Cna-like_B-typ_dom"/>
</dbReference>
<dbReference type="InterPro" id="IPR008456">
    <property type="entry name" value="Collagen-bd_dom"/>
</dbReference>
<dbReference type="InterPro" id="IPR011252">
    <property type="entry name" value="Fibrogen-bd_dom1"/>
</dbReference>
<dbReference type="InterPro" id="IPR013783">
    <property type="entry name" value="Ig-like_fold"/>
</dbReference>
<dbReference type="InterPro" id="IPR019931">
    <property type="entry name" value="LPXTG_anchor"/>
</dbReference>
<dbReference type="InterPro" id="IPR041033">
    <property type="entry name" value="SpaA_PFL_dom_1"/>
</dbReference>
<dbReference type="NCBIfam" id="TIGR01167">
    <property type="entry name" value="LPXTG_anchor"/>
    <property type="match status" value="1"/>
</dbReference>
<dbReference type="Pfam" id="PF05738">
    <property type="entry name" value="Cna_B"/>
    <property type="match status" value="7"/>
</dbReference>
<dbReference type="Pfam" id="PF05737">
    <property type="entry name" value="Collagen_bind"/>
    <property type="match status" value="1"/>
</dbReference>
<dbReference type="Pfam" id="PF17802">
    <property type="entry name" value="SpaA"/>
    <property type="match status" value="1"/>
</dbReference>
<dbReference type="SUPFAM" id="SSF49401">
    <property type="entry name" value="Bacterial adhesins"/>
    <property type="match status" value="2"/>
</dbReference>
<dbReference type="SUPFAM" id="SSF49478">
    <property type="entry name" value="Cna protein B-type domain"/>
    <property type="match status" value="8"/>
</dbReference>
<dbReference type="PROSITE" id="PS50847">
    <property type="entry name" value="GRAM_POS_ANCHORING"/>
    <property type="match status" value="1"/>
</dbReference>
<accession>Q53654</accession>
<evidence type="ECO:0000255" key="1"/>
<evidence type="ECO:0000255" key="2">
    <source>
        <dbReference type="PROSITE-ProRule" id="PRU00477"/>
    </source>
</evidence>
<evidence type="ECO:0000256" key="3">
    <source>
        <dbReference type="SAM" id="MobiDB-lite"/>
    </source>
</evidence>
<evidence type="ECO:0000269" key="4">
    <source>
    </source>
</evidence>
<evidence type="ECO:0000269" key="5">
    <source>
    </source>
</evidence>
<evidence type="ECO:0000269" key="6">
    <source>
    </source>
</evidence>
<evidence type="ECO:0000269" key="7">
    <source>
    </source>
</evidence>
<evidence type="ECO:0000269" key="8">
    <source>
    </source>
</evidence>
<evidence type="ECO:0000269" key="9">
    <source>
    </source>
</evidence>
<evidence type="ECO:0000305" key="10"/>
<evidence type="ECO:0007829" key="11">
    <source>
        <dbReference type="PDB" id="1AMX"/>
    </source>
</evidence>
<evidence type="ECO:0007829" key="12">
    <source>
        <dbReference type="PDB" id="1D2O"/>
    </source>
</evidence>
<evidence type="ECO:0007829" key="13">
    <source>
        <dbReference type="PDB" id="1D2P"/>
    </source>
</evidence>
<evidence type="ECO:0007829" key="14">
    <source>
        <dbReference type="PDB" id="2F68"/>
    </source>
</evidence>
<evidence type="ECO:0007829" key="15">
    <source>
        <dbReference type="PDB" id="2F6A"/>
    </source>
</evidence>
<comment type="function">
    <text evidence="5 6 8 9">Collagen-binding adhesin that mediates bacterial adherence to collagenous tissues such as cartilage (PubMed:8218209). Participates in the infectious process by acting as a virulence factor in many different animal models of staphylococcal infections including arthritis, endocarditis and keratitis (PubMed:10816547, PubMed:15181582). Inhibits the activation of the classical complement pathway by interacting with host C1q and interfering with the association between host C1r with C1q (PubMed:23720782).</text>
</comment>
<comment type="subunit">
    <text evidence="7 8">Interacts (via N-terminus) with type I collagen (PubMed:16362049). Interacts with host C1QA (PubMed:23720782).</text>
</comment>
<comment type="subcellular location">
    <subcellularLocation>
        <location evidence="10">Secreted</location>
        <location evidence="10">Cell wall</location>
        <topology evidence="10">Peptidoglycan-anchor</topology>
    </subcellularLocation>
</comment>
<comment type="domain">
    <text evidence="4 7 9">Composed of a N-terminal A-region and a number of B-repeats depending on the strain. At the C-terminal end are features required for surface targeting and covalently anchoring to the peptidoglycan. The collagen binding activity is located in the A-region.</text>
</comment>
<keyword id="KW-0002">3D-structure</keyword>
<keyword id="KW-0134">Cell wall</keyword>
<keyword id="KW-1017">Isopeptide bond</keyword>
<keyword id="KW-0572">Peptidoglycan-anchor</keyword>
<keyword id="KW-0677">Repeat</keyword>
<keyword id="KW-0964">Secreted</keyword>
<keyword id="KW-0732">Signal</keyword>
<keyword id="KW-0843">Virulence</keyword>
<sequence>MNKNVLKFMVFIMLLNIITPLFNKNEAFAARDISSTNVTDLTVSPSKIEDGGKTTVKMTFDDKNGKIQNGDMIKVAWPTSGTVKIEGYSKTVPLTVKGEQVGQAVITPDGATITFNDKVEKLSDVSGFAEFEVQGRNLTQTNTSDDKVATITSGNKSTNVTVHKSEAGTSSVFYYKTGDMLPEDTTHVRWFLNINNEKSYVSKDITIKDQIQGGQQLDLSTLNINVTGTHSNYYSGQSAITDFEKAFPGSKITVDNTKNTIDVTIPQGYGSYNSFSINYKTKITNEQQKEFVNNSQAWYQEHGKEEVNGKSFNHTVHNINANAGIEGTVKGELKVLKQDKDTKAPIANVKFKLSKKDGSVVKDNQKEIEIITDANGIANIKALPSGDYILKEIEAPRPYTFDKDKEYPFTMKDTDNQGYFTTIENAKAIEKTKDVSAQKVWEGTQKVKPTIYFKLYKQDDNQNTTPVDKAEIKKLEDGTTKVTWSNLPENDKNGKAIKYLVKEVNAQGEDTTPEGYTKKENGLVVTNTEKPIETTSISGEKVWDDKDNQDGKRPEKVSVNLLANGEKVKTLDVTSETNWKYEFKDLPKYDEGKKIEYTVTEDHVKDYTTDINGTTITNKYTPGETSATVTKNWDDNNNQDGKRPTEIKVELYQDGKATGKTAILNESNNWTHTWTGLDEKAKGQQVKYTVEELTKVKGYTTHVDNNDMGNLIVTNKYTPETTSISGEKVWDDKDNQDGKRPEKVSVNLLADGEKVKTLDVTSETNWKYEFKDLPKYDEGKKIEYTVTEDHVKDYTTDINGTTITNKYTPGETSATVTKNWDDNNNQDGKRPTEIKVELYQDGKATGKTAILNESNNWTHTWTGLDEKAKGQQVKYTVEELTKVKGYTTHVDNNDMGNLIVTNKYTPETTSISGEKVWDDKDNQDGKRPEKVSVNLLANGEKVKTLDVTSETNWKYEFKDLPKYDEGKKIEYTVTEDHVKDYTTDINGTTITNKYTPGETSATVTKNWDDNNNQDGKRPTEIKVELYQDGKATGKTAILNESNNWTHTWTGLDEKAKGQQVKYTVDELTKVNGYTTHVDNNDMGNLIVTNKYTPKKPNKPIYPEKPKDKTPPTKPDHSNKVKPTPPDKPSKVDKDDQPKDNKTKPENPLKELPKTGMKIITSWITWVFIGILGLYLILRKRFNS</sequence>
<feature type="signal peptide" evidence="1">
    <location>
        <begin position="1"/>
        <end position="29"/>
    </location>
</feature>
<feature type="chain" id="PRO_0000005599" description="Collagen adhesin">
    <location>
        <begin position="30"/>
        <end position="1154"/>
    </location>
</feature>
<feature type="propeptide" id="PRO_0000005600" description="Removed by sortase" evidence="2">
    <location>
        <begin position="1155"/>
        <end position="1183"/>
    </location>
</feature>
<feature type="repeat" description="B1">
    <location>
        <begin position="533"/>
        <end position="719"/>
    </location>
</feature>
<feature type="repeat" description="B2">
    <location>
        <begin position="720"/>
        <end position="906"/>
    </location>
</feature>
<feature type="repeat" description="B3">
    <location>
        <begin position="907"/>
        <end position="1093"/>
    </location>
</feature>
<feature type="region of interest" description="Collagen-binding">
    <location>
        <begin position="151"/>
        <end position="318"/>
    </location>
</feature>
<feature type="region of interest" description="3 X 187 AA approximate tandem repeats">
    <location>
        <begin position="533"/>
        <end position="1093"/>
    </location>
</feature>
<feature type="region of interest" description="Disordered" evidence="3">
    <location>
        <begin position="1074"/>
        <end position="1150"/>
    </location>
</feature>
<feature type="short sequence motif" description="LPXTG sorting signal" evidence="2">
    <location>
        <begin position="1151"/>
        <end position="1155"/>
    </location>
</feature>
<feature type="compositionally biased region" description="Basic and acidic residues" evidence="3">
    <location>
        <begin position="1101"/>
        <end position="1118"/>
    </location>
</feature>
<feature type="compositionally biased region" description="Basic and acidic residues" evidence="3">
    <location>
        <begin position="1127"/>
        <end position="1150"/>
    </location>
</feature>
<feature type="site" description="Autocatalyzes isopeptide 176-293 formation" evidence="1">
    <location>
        <position position="209"/>
    </location>
</feature>
<feature type="site" description="Autocatalyzes isopeptide 541-618 formation" evidence="1">
    <location>
        <position position="601"/>
    </location>
</feature>
<feature type="site" description="Autocatalyzes isopeptide 631-715 formation" evidence="1">
    <location>
        <position position="692"/>
    </location>
</feature>
<feature type="site" description="Autocatalyzes isopeptide 728-805 formation" evidence="1">
    <location>
        <position position="788"/>
    </location>
</feature>
<feature type="site" description="Autocatalyzes isopeptide 818-902 formation" evidence="1">
    <location>
        <position position="879"/>
    </location>
</feature>
<feature type="site" description="Autocatalyzes isopeptide 915-992 formation" evidence="1">
    <location>
        <position position="975"/>
    </location>
</feature>
<feature type="site" description="Autocatalyzes isopeptide 1005-1089 formation" evidence="1">
    <location>
        <position position="1066"/>
    </location>
</feature>
<feature type="modified residue" description="Pentaglycyl murein peptidoglycan amidated threonine" evidence="2">
    <location>
        <position position="1154"/>
    </location>
</feature>
<feature type="cross-link" description="Isoaspartyl lysine isopeptide (Lys-Asn)" evidence="1">
    <location>
        <begin position="176"/>
        <end position="293"/>
    </location>
</feature>
<feature type="cross-link" description="Isoaspartyl lysine isopeptide (Lys-Asn)" evidence="1">
    <location>
        <begin position="541"/>
        <end position="618"/>
    </location>
</feature>
<feature type="cross-link" description="Isoaspartyl lysine isopeptide (Lys-Asn)" evidence="1">
    <location>
        <begin position="631"/>
        <end position="715"/>
    </location>
</feature>
<feature type="cross-link" description="Isoaspartyl lysine isopeptide (Lys-Asn)" evidence="1">
    <location>
        <begin position="728"/>
        <end position="805"/>
    </location>
</feature>
<feature type="cross-link" description="Isoaspartyl lysine isopeptide (Lys-Asn)" evidence="1">
    <location>
        <begin position="818"/>
        <end position="902"/>
    </location>
</feature>
<feature type="cross-link" description="Isoaspartyl lysine isopeptide (Lys-Asn)" evidence="1">
    <location>
        <begin position="915"/>
        <end position="992"/>
    </location>
</feature>
<feature type="cross-link" description="Isoaspartyl lysine isopeptide (Lys-Asn)" evidence="1">
    <location>
        <begin position="1005"/>
        <end position="1089"/>
    </location>
</feature>
<feature type="mutagenesis site" description="More than 90% loss of collagen-binding." evidence="7">
    <original>Y</original>
    <variation>K</variation>
    <location>
        <position position="175"/>
    </location>
</feature>
<feature type="helix" evidence="14">
    <location>
        <begin position="34"/>
        <end position="37"/>
    </location>
</feature>
<feature type="strand" evidence="14">
    <location>
        <begin position="38"/>
        <end position="48"/>
    </location>
</feature>
<feature type="strand" evidence="14">
    <location>
        <begin position="52"/>
        <end position="65"/>
    </location>
</feature>
<feature type="strand" evidence="14">
    <location>
        <begin position="71"/>
        <end position="76"/>
    </location>
</feature>
<feature type="strand" evidence="14">
    <location>
        <begin position="80"/>
        <end position="87"/>
    </location>
</feature>
<feature type="strand" evidence="14">
    <location>
        <begin position="90"/>
        <end position="96"/>
    </location>
</feature>
<feature type="strand" evidence="14">
    <location>
        <begin position="99"/>
        <end position="107"/>
    </location>
</feature>
<feature type="strand" evidence="14">
    <location>
        <begin position="110"/>
        <end position="115"/>
    </location>
</feature>
<feature type="helix" evidence="14">
    <location>
        <begin position="117"/>
        <end position="119"/>
    </location>
</feature>
<feature type="strand" evidence="14">
    <location>
        <begin position="123"/>
        <end position="139"/>
    </location>
</feature>
<feature type="strand" evidence="14">
    <location>
        <begin position="148"/>
        <end position="153"/>
    </location>
</feature>
<feature type="strand" evidence="14">
    <location>
        <begin position="156"/>
        <end position="162"/>
    </location>
</feature>
<feature type="strand" evidence="14">
    <location>
        <begin position="175"/>
        <end position="177"/>
    </location>
</feature>
<feature type="strand" evidence="14">
    <location>
        <begin position="185"/>
        <end position="194"/>
    </location>
</feature>
<feature type="strand" evidence="14">
    <location>
        <begin position="201"/>
        <end position="203"/>
    </location>
</feature>
<feature type="strand" evidence="14">
    <location>
        <begin position="205"/>
        <end position="211"/>
    </location>
</feature>
<feature type="strand" evidence="14">
    <location>
        <begin position="215"/>
        <end position="217"/>
    </location>
</feature>
<feature type="helix" evidence="14">
    <location>
        <begin position="219"/>
        <end position="221"/>
    </location>
</feature>
<feature type="strand" evidence="14">
    <location>
        <begin position="224"/>
        <end position="228"/>
    </location>
</feature>
<feature type="strand" evidence="14">
    <location>
        <begin position="232"/>
        <end position="234"/>
    </location>
</feature>
<feature type="strand" evidence="11">
    <location>
        <begin position="236"/>
        <end position="238"/>
    </location>
</feature>
<feature type="helix" evidence="14">
    <location>
        <begin position="239"/>
        <end position="246"/>
    </location>
</feature>
<feature type="turn" evidence="15">
    <location>
        <begin position="247"/>
        <end position="249"/>
    </location>
</feature>
<feature type="strand" evidence="14">
    <location>
        <begin position="251"/>
        <end position="255"/>
    </location>
</feature>
<feature type="turn" evidence="14">
    <location>
        <begin position="256"/>
        <end position="259"/>
    </location>
</feature>
<feature type="strand" evidence="14">
    <location>
        <begin position="260"/>
        <end position="265"/>
    </location>
</feature>
<feature type="helix" evidence="14">
    <location>
        <begin position="267"/>
        <end position="270"/>
    </location>
</feature>
<feature type="strand" evidence="14">
    <location>
        <begin position="273"/>
        <end position="284"/>
    </location>
</feature>
<feature type="strand" evidence="14">
    <location>
        <begin position="289"/>
        <end position="299"/>
    </location>
</feature>
<feature type="strand" evidence="14">
    <location>
        <begin position="307"/>
        <end position="311"/>
    </location>
</feature>
<feature type="strand" evidence="14">
    <location>
        <begin position="314"/>
        <end position="317"/>
    </location>
</feature>
<feature type="strand" evidence="14">
    <location>
        <begin position="321"/>
        <end position="328"/>
    </location>
</feature>
<feature type="strand" evidence="12">
    <location>
        <begin position="534"/>
        <end position="545"/>
    </location>
</feature>
<feature type="turn" evidence="12">
    <location>
        <begin position="546"/>
        <end position="550"/>
    </location>
</feature>
<feature type="strand" evidence="12">
    <location>
        <begin position="555"/>
        <end position="563"/>
    </location>
</feature>
<feature type="strand" evidence="12">
    <location>
        <begin position="566"/>
        <end position="574"/>
    </location>
</feature>
<feature type="helix" evidence="12">
    <location>
        <begin position="575"/>
        <end position="577"/>
    </location>
</feature>
<feature type="strand" evidence="12">
    <location>
        <begin position="580"/>
        <end position="590"/>
    </location>
</feature>
<feature type="strand" evidence="12">
    <location>
        <begin position="597"/>
        <end position="601"/>
    </location>
</feature>
<feature type="strand" evidence="12">
    <location>
        <begin position="607"/>
        <end position="612"/>
    </location>
</feature>
<feature type="strand" evidence="12">
    <location>
        <begin position="615"/>
        <end position="620"/>
    </location>
</feature>
<feature type="strand" evidence="12">
    <location>
        <begin position="624"/>
        <end position="636"/>
    </location>
</feature>
<feature type="strand" evidence="12">
    <location>
        <begin position="639"/>
        <end position="641"/>
    </location>
</feature>
<feature type="strand" evidence="12">
    <location>
        <begin position="647"/>
        <end position="653"/>
    </location>
</feature>
<feature type="strand" evidence="12">
    <location>
        <begin position="656"/>
        <end position="665"/>
    </location>
</feature>
<feature type="helix" evidence="12">
    <location>
        <begin position="666"/>
        <end position="668"/>
    </location>
</feature>
<feature type="strand" evidence="12">
    <location>
        <begin position="671"/>
        <end position="681"/>
    </location>
</feature>
<feature type="strand" evidence="12">
    <location>
        <begin position="688"/>
        <end position="692"/>
    </location>
</feature>
<feature type="strand" evidence="12">
    <location>
        <begin position="699"/>
        <end position="704"/>
    </location>
</feature>
<feature type="strand" evidence="12">
    <location>
        <begin position="710"/>
        <end position="717"/>
    </location>
</feature>
<feature type="strand" evidence="13">
    <location>
        <begin position="721"/>
        <end position="732"/>
    </location>
</feature>
<feature type="turn" evidence="13">
    <location>
        <begin position="733"/>
        <end position="737"/>
    </location>
</feature>
<feature type="strand" evidence="13">
    <location>
        <begin position="744"/>
        <end position="750"/>
    </location>
</feature>
<feature type="strand" evidence="13">
    <location>
        <begin position="753"/>
        <end position="760"/>
    </location>
</feature>
<feature type="helix" evidence="13">
    <location>
        <begin position="762"/>
        <end position="764"/>
    </location>
</feature>
<feature type="strand" evidence="13">
    <location>
        <begin position="766"/>
        <end position="777"/>
    </location>
</feature>
<feature type="strand" evidence="13">
    <location>
        <begin position="784"/>
        <end position="788"/>
    </location>
</feature>
<feature type="strand" evidence="13">
    <location>
        <begin position="794"/>
        <end position="799"/>
    </location>
</feature>
<feature type="strand" evidence="13">
    <location>
        <begin position="802"/>
        <end position="807"/>
    </location>
</feature>
<feature type="strand" evidence="13">
    <location>
        <begin position="811"/>
        <end position="822"/>
    </location>
</feature>
<feature type="helix" evidence="13">
    <location>
        <begin position="823"/>
        <end position="825"/>
    </location>
</feature>
<feature type="strand" evidence="13">
    <location>
        <begin position="832"/>
        <end position="840"/>
    </location>
</feature>
<feature type="strand" evidence="13">
    <location>
        <begin position="843"/>
        <end position="852"/>
    </location>
</feature>
<feature type="turn" evidence="13">
    <location>
        <begin position="853"/>
        <end position="857"/>
    </location>
</feature>
<feature type="strand" evidence="13">
    <location>
        <begin position="858"/>
        <end position="868"/>
    </location>
</feature>
<feature type="strand" evidence="13">
    <location>
        <begin position="875"/>
        <end position="879"/>
    </location>
</feature>
<feature type="strand" evidence="13">
    <location>
        <begin position="886"/>
        <end position="891"/>
    </location>
</feature>
<feature type="helix" evidence="13">
    <location>
        <begin position="895"/>
        <end position="897"/>
    </location>
</feature>
<feature type="strand" evidence="13">
    <location>
        <begin position="898"/>
        <end position="904"/>
    </location>
</feature>
<proteinExistence type="evidence at protein level"/>
<name>CNA_STAAU</name>